<accession>Q822Q0</accession>
<organism>
    <name type="scientific">Chlamydia caviae (strain ATCC VR-813 / DSM 19441 / 03DC25 / GPIC)</name>
    <name type="common">Chlamydophila caviae</name>
    <dbReference type="NCBI Taxonomy" id="227941"/>
    <lineage>
        <taxon>Bacteria</taxon>
        <taxon>Pseudomonadati</taxon>
        <taxon>Chlamydiota</taxon>
        <taxon>Chlamydiia</taxon>
        <taxon>Chlamydiales</taxon>
        <taxon>Chlamydiaceae</taxon>
        <taxon>Chlamydia/Chlamydophila group</taxon>
        <taxon>Chlamydia</taxon>
    </lineage>
</organism>
<reference key="1">
    <citation type="journal article" date="2003" name="Nucleic Acids Res.">
        <title>Genome sequence of Chlamydophila caviae (Chlamydia psittaci GPIC): examining the role of niche-specific genes in the evolution of the Chlamydiaceae.</title>
        <authorList>
            <person name="Read T.D."/>
            <person name="Myers G.S.A."/>
            <person name="Brunham R.C."/>
            <person name="Nelson W.C."/>
            <person name="Paulsen I.T."/>
            <person name="Heidelberg J.F."/>
            <person name="Holtzapple E.K."/>
            <person name="Khouri H.M."/>
            <person name="Federova N.B."/>
            <person name="Carty H.A."/>
            <person name="Umayam L.A."/>
            <person name="Haft D.H."/>
            <person name="Peterson J.D."/>
            <person name="Beanan M.J."/>
            <person name="White O."/>
            <person name="Salzberg S.L."/>
            <person name="Hsia R.-C."/>
            <person name="McClarty G."/>
            <person name="Rank R.G."/>
            <person name="Bavoil P.M."/>
            <person name="Fraser C.M."/>
        </authorList>
    </citation>
    <scope>NUCLEOTIDE SEQUENCE [LARGE SCALE GENOMIC DNA]</scope>
    <source>
        <strain>ATCC VR-813 / DSM 19441 / 03DC25 / GPIC</strain>
    </source>
</reference>
<gene>
    <name evidence="1" type="primary">hemL</name>
    <name type="ordered locus">CCA_00629</name>
</gene>
<dbReference type="EC" id="5.4.3.8" evidence="1"/>
<dbReference type="EMBL" id="AE015925">
    <property type="protein sequence ID" value="AAP05371.1"/>
    <property type="molecule type" value="Genomic_DNA"/>
</dbReference>
<dbReference type="RefSeq" id="WP_011006586.1">
    <property type="nucleotide sequence ID" value="NC_003361.3"/>
</dbReference>
<dbReference type="SMR" id="Q822Q0"/>
<dbReference type="STRING" id="227941.CCA_00629"/>
<dbReference type="KEGG" id="cca:CCA_00629"/>
<dbReference type="eggNOG" id="COG0001">
    <property type="taxonomic scope" value="Bacteria"/>
</dbReference>
<dbReference type="HOGENOM" id="CLU_016922_1_5_0"/>
<dbReference type="OrthoDB" id="9807885at2"/>
<dbReference type="UniPathway" id="UPA00251">
    <property type="reaction ID" value="UER00317"/>
</dbReference>
<dbReference type="Proteomes" id="UP000002193">
    <property type="component" value="Chromosome"/>
</dbReference>
<dbReference type="GO" id="GO:0005737">
    <property type="term" value="C:cytoplasm"/>
    <property type="evidence" value="ECO:0007669"/>
    <property type="project" value="UniProtKB-SubCell"/>
</dbReference>
<dbReference type="GO" id="GO:0042286">
    <property type="term" value="F:glutamate-1-semialdehyde 2,1-aminomutase activity"/>
    <property type="evidence" value="ECO:0007669"/>
    <property type="project" value="UniProtKB-UniRule"/>
</dbReference>
<dbReference type="GO" id="GO:0030170">
    <property type="term" value="F:pyridoxal phosphate binding"/>
    <property type="evidence" value="ECO:0007669"/>
    <property type="project" value="InterPro"/>
</dbReference>
<dbReference type="GO" id="GO:0008483">
    <property type="term" value="F:transaminase activity"/>
    <property type="evidence" value="ECO:0007669"/>
    <property type="project" value="InterPro"/>
</dbReference>
<dbReference type="GO" id="GO:0006782">
    <property type="term" value="P:protoporphyrinogen IX biosynthetic process"/>
    <property type="evidence" value="ECO:0007669"/>
    <property type="project" value="UniProtKB-UniRule"/>
</dbReference>
<dbReference type="CDD" id="cd00610">
    <property type="entry name" value="OAT_like"/>
    <property type="match status" value="1"/>
</dbReference>
<dbReference type="Gene3D" id="3.90.1150.10">
    <property type="entry name" value="Aspartate Aminotransferase, domain 1"/>
    <property type="match status" value="1"/>
</dbReference>
<dbReference type="Gene3D" id="3.40.640.10">
    <property type="entry name" value="Type I PLP-dependent aspartate aminotransferase-like (Major domain)"/>
    <property type="match status" value="1"/>
</dbReference>
<dbReference type="HAMAP" id="MF_00375">
    <property type="entry name" value="HemL_aminotrans_3"/>
    <property type="match status" value="1"/>
</dbReference>
<dbReference type="InterPro" id="IPR004639">
    <property type="entry name" value="4pyrrol_synth_GluAld_NH2Trfase"/>
</dbReference>
<dbReference type="InterPro" id="IPR005814">
    <property type="entry name" value="Aminotrans_3"/>
</dbReference>
<dbReference type="InterPro" id="IPR049704">
    <property type="entry name" value="Aminotrans_3_PPA_site"/>
</dbReference>
<dbReference type="InterPro" id="IPR015424">
    <property type="entry name" value="PyrdxlP-dep_Trfase"/>
</dbReference>
<dbReference type="InterPro" id="IPR015421">
    <property type="entry name" value="PyrdxlP-dep_Trfase_major"/>
</dbReference>
<dbReference type="InterPro" id="IPR015422">
    <property type="entry name" value="PyrdxlP-dep_Trfase_small"/>
</dbReference>
<dbReference type="NCBIfam" id="NF000818">
    <property type="entry name" value="PRK00062.1"/>
    <property type="match status" value="1"/>
</dbReference>
<dbReference type="NCBIfam" id="NF001864">
    <property type="entry name" value="PRK00615.1"/>
    <property type="match status" value="1"/>
</dbReference>
<dbReference type="PANTHER" id="PTHR43713">
    <property type="entry name" value="GLUTAMATE-1-SEMIALDEHYDE 2,1-AMINOMUTASE"/>
    <property type="match status" value="1"/>
</dbReference>
<dbReference type="PANTHER" id="PTHR43713:SF3">
    <property type="entry name" value="GLUTAMATE-1-SEMIALDEHYDE 2,1-AMINOMUTASE 1, CHLOROPLASTIC-RELATED"/>
    <property type="match status" value="1"/>
</dbReference>
<dbReference type="Pfam" id="PF00202">
    <property type="entry name" value="Aminotran_3"/>
    <property type="match status" value="1"/>
</dbReference>
<dbReference type="SUPFAM" id="SSF53383">
    <property type="entry name" value="PLP-dependent transferases"/>
    <property type="match status" value="1"/>
</dbReference>
<dbReference type="PROSITE" id="PS00600">
    <property type="entry name" value="AA_TRANSFER_CLASS_3"/>
    <property type="match status" value="1"/>
</dbReference>
<evidence type="ECO:0000255" key="1">
    <source>
        <dbReference type="HAMAP-Rule" id="MF_00375"/>
    </source>
</evidence>
<name>GSA_CHLCV</name>
<protein>
    <recommendedName>
        <fullName evidence="1">Glutamate-1-semialdehyde 2,1-aminomutase</fullName>
        <shortName evidence="1">GSA</shortName>
        <ecNumber evidence="1">5.4.3.8</ecNumber>
    </recommendedName>
    <alternativeName>
        <fullName evidence="1">Glutamate-1-semialdehyde aminotransferase</fullName>
        <shortName evidence="1">GSA-AT</shortName>
    </alternativeName>
</protein>
<feature type="chain" id="PRO_0000382292" description="Glutamate-1-semialdehyde 2,1-aminomutase">
    <location>
        <begin position="1"/>
        <end position="437"/>
    </location>
</feature>
<feature type="modified residue" description="N6-(pyridoxal phosphate)lysine" evidence="1">
    <location>
        <position position="273"/>
    </location>
</feature>
<keyword id="KW-0963">Cytoplasm</keyword>
<keyword id="KW-0413">Isomerase</keyword>
<keyword id="KW-0627">Porphyrin biosynthesis</keyword>
<keyword id="KW-0663">Pyridoxal phosphate</keyword>
<proteinExistence type="inferred from homology"/>
<sequence length="437" mass="47912">MPVIDETPMTYTEACRYFPGGVNSPIRACIPVGIVPPIVSSASRDVFIDSFGKNFIDFCGSWGSLIHGHSHPKILDALCSAASQGTSYGLTSENEISLATTLFSCLGLQDHKLRFVSSGTEAAMTSVRLACGVTQRSVMIKFLGCYHGHADVLLKGMTIDENNLMEVPHLVDRYFSSDPCLPLTLILPYNDLKTFEEVMEKIGERVACVIFEPIAINMGVVLPEAGWIESIITTCRRYGALSIMDEVVTGFRMGSRGMRSILDVTPDITVYGKILGGGMPVAAVLAHQSIMEHLMPVGTVFQAGTLSGNPIAMAAGQASIELCQERDFYPKLENLTEGFLSPIEDFIRCKGFPIALVRAGSMFSFFFRETPPRNLRDVQECDQKTFGIFYRHAFSRGVYLSPASMEASFISSVHSRENLAYTQNVLIDSLVKTFEGI</sequence>
<comment type="catalytic activity">
    <reaction evidence="1">
        <text>(S)-4-amino-5-oxopentanoate = 5-aminolevulinate</text>
        <dbReference type="Rhea" id="RHEA:14265"/>
        <dbReference type="ChEBI" id="CHEBI:57501"/>
        <dbReference type="ChEBI" id="CHEBI:356416"/>
        <dbReference type="EC" id="5.4.3.8"/>
    </reaction>
</comment>
<comment type="cofactor">
    <cofactor evidence="1">
        <name>pyridoxal 5'-phosphate</name>
        <dbReference type="ChEBI" id="CHEBI:597326"/>
    </cofactor>
</comment>
<comment type="pathway">
    <text evidence="1">Porphyrin-containing compound metabolism; protoporphyrin-IX biosynthesis; 5-aminolevulinate from L-glutamyl-tRNA(Glu): step 2/2.</text>
</comment>
<comment type="subunit">
    <text evidence="1">Homodimer.</text>
</comment>
<comment type="subcellular location">
    <subcellularLocation>
        <location evidence="1">Cytoplasm</location>
    </subcellularLocation>
</comment>
<comment type="similarity">
    <text evidence="1">Belongs to the class-III pyridoxal-phosphate-dependent aminotransferase family. HemL subfamily.</text>
</comment>